<evidence type="ECO:0000250" key="1"/>
<evidence type="ECO:0000305" key="2"/>
<evidence type="ECO:0007829" key="3">
    <source>
        <dbReference type="PDB" id="8FN2"/>
    </source>
</evidence>
<gene>
    <name type="primary">rpmF</name>
    <name type="ordered locus">BB_0703</name>
</gene>
<proteinExistence type="evidence at protein level"/>
<organism>
    <name type="scientific">Borreliella burgdorferi (strain ATCC 35210 / DSM 4680 / CIP 102532 / B31)</name>
    <name type="common">Borrelia burgdorferi</name>
    <dbReference type="NCBI Taxonomy" id="224326"/>
    <lineage>
        <taxon>Bacteria</taxon>
        <taxon>Pseudomonadati</taxon>
        <taxon>Spirochaetota</taxon>
        <taxon>Spirochaetia</taxon>
        <taxon>Spirochaetales</taxon>
        <taxon>Borreliaceae</taxon>
        <taxon>Borreliella</taxon>
    </lineage>
</organism>
<keyword id="KW-0002">3D-structure</keyword>
<keyword id="KW-1185">Reference proteome</keyword>
<keyword id="KW-0687">Ribonucleoprotein</keyword>
<keyword id="KW-0689">Ribosomal protein</keyword>
<sequence length="60" mass="7076">MAVPKFKPSKSRSRTRRSINMRKKIPQFQECSNCGNLGVRHRICLKCGYYRNNQYLEIGL</sequence>
<comment type="similarity">
    <text evidence="2">Belongs to the bacterial ribosomal protein bL32 family.</text>
</comment>
<name>RL32_BORBU</name>
<protein>
    <recommendedName>
        <fullName evidence="2">Large ribosomal subunit protein bL32</fullName>
    </recommendedName>
    <alternativeName>
        <fullName>50S ribosomal protein L32</fullName>
    </alternativeName>
</protein>
<dbReference type="EMBL" id="AE000783">
    <property type="protein sequence ID" value="AAC67042.1"/>
    <property type="molecule type" value="Genomic_DNA"/>
</dbReference>
<dbReference type="PIR" id="F70187">
    <property type="entry name" value="F70187"/>
</dbReference>
<dbReference type="RefSeq" id="NP_212837.1">
    <property type="nucleotide sequence ID" value="NC_001318.1"/>
</dbReference>
<dbReference type="RefSeq" id="WP_002557290.1">
    <property type="nucleotide sequence ID" value="NC_001318.1"/>
</dbReference>
<dbReference type="PDB" id="8FMW">
    <property type="method" value="EM"/>
    <property type="resolution" value="2.86 A"/>
    <property type="chains" value="Ad=2-60"/>
</dbReference>
<dbReference type="PDB" id="8FN2">
    <property type="method" value="EM"/>
    <property type="resolution" value="3.40 A"/>
    <property type="chains" value="d=2-60"/>
</dbReference>
<dbReference type="PDBsum" id="8FMW"/>
<dbReference type="PDBsum" id="8FN2"/>
<dbReference type="EMDB" id="EMD-29298"/>
<dbReference type="EMDB" id="EMD-29304"/>
<dbReference type="SMR" id="O51646"/>
<dbReference type="STRING" id="224326.BB_0703"/>
<dbReference type="PaxDb" id="224326-BB_0703"/>
<dbReference type="EnsemblBacteria" id="AAC67042">
    <property type="protein sequence ID" value="AAC67042"/>
    <property type="gene ID" value="BB_0703"/>
</dbReference>
<dbReference type="GeneID" id="83866182"/>
<dbReference type="KEGG" id="bbu:BB_0703"/>
<dbReference type="PATRIC" id="fig|224326.49.peg.1094"/>
<dbReference type="HOGENOM" id="CLU_129084_1_0_12"/>
<dbReference type="OrthoDB" id="9812874at2"/>
<dbReference type="PRO" id="PR:O51646"/>
<dbReference type="Proteomes" id="UP000001807">
    <property type="component" value="Chromosome"/>
</dbReference>
<dbReference type="GO" id="GO:0015934">
    <property type="term" value="C:large ribosomal subunit"/>
    <property type="evidence" value="ECO:0007669"/>
    <property type="project" value="InterPro"/>
</dbReference>
<dbReference type="GO" id="GO:0003735">
    <property type="term" value="F:structural constituent of ribosome"/>
    <property type="evidence" value="ECO:0007669"/>
    <property type="project" value="InterPro"/>
</dbReference>
<dbReference type="GO" id="GO:0006412">
    <property type="term" value="P:translation"/>
    <property type="evidence" value="ECO:0007669"/>
    <property type="project" value="UniProtKB-UniRule"/>
</dbReference>
<dbReference type="HAMAP" id="MF_00340">
    <property type="entry name" value="Ribosomal_bL32"/>
    <property type="match status" value="1"/>
</dbReference>
<dbReference type="InterPro" id="IPR002677">
    <property type="entry name" value="Ribosomal_bL32"/>
</dbReference>
<dbReference type="InterPro" id="IPR044957">
    <property type="entry name" value="Ribosomal_bL32_bact"/>
</dbReference>
<dbReference type="InterPro" id="IPR011332">
    <property type="entry name" value="Ribosomal_zn-bd"/>
</dbReference>
<dbReference type="NCBIfam" id="TIGR01031">
    <property type="entry name" value="rpmF_bact"/>
    <property type="match status" value="1"/>
</dbReference>
<dbReference type="PANTHER" id="PTHR35534">
    <property type="entry name" value="50S RIBOSOMAL PROTEIN L32"/>
    <property type="match status" value="1"/>
</dbReference>
<dbReference type="PANTHER" id="PTHR35534:SF1">
    <property type="entry name" value="LARGE RIBOSOMAL SUBUNIT PROTEIN BL32"/>
    <property type="match status" value="1"/>
</dbReference>
<dbReference type="Pfam" id="PF01783">
    <property type="entry name" value="Ribosomal_L32p"/>
    <property type="match status" value="1"/>
</dbReference>
<dbReference type="SUPFAM" id="SSF57829">
    <property type="entry name" value="Zn-binding ribosomal proteins"/>
    <property type="match status" value="1"/>
</dbReference>
<feature type="initiator methionine" description="Removed" evidence="1">
    <location>
        <position position="1"/>
    </location>
</feature>
<feature type="chain" id="PRO_0000172313" description="Large ribosomal subunit protein bL32">
    <location>
        <begin position="2"/>
        <end position="60"/>
    </location>
</feature>
<feature type="helix" evidence="3">
    <location>
        <begin position="10"/>
        <end position="20"/>
    </location>
</feature>
<feature type="strand" evidence="3">
    <location>
        <begin position="28"/>
        <end position="30"/>
    </location>
</feature>
<feature type="turn" evidence="3">
    <location>
        <begin position="32"/>
        <end position="34"/>
    </location>
</feature>
<feature type="strand" evidence="3">
    <location>
        <begin position="37"/>
        <end position="39"/>
    </location>
</feature>
<feature type="turn" evidence="3">
    <location>
        <begin position="45"/>
        <end position="47"/>
    </location>
</feature>
<feature type="strand" evidence="3">
    <location>
        <begin position="49"/>
        <end position="52"/>
    </location>
</feature>
<reference key="1">
    <citation type="journal article" date="1997" name="Nature">
        <title>Genomic sequence of a Lyme disease spirochaete, Borrelia burgdorferi.</title>
        <authorList>
            <person name="Fraser C.M."/>
            <person name="Casjens S."/>
            <person name="Huang W.M."/>
            <person name="Sutton G.G."/>
            <person name="Clayton R.A."/>
            <person name="Lathigra R."/>
            <person name="White O."/>
            <person name="Ketchum K.A."/>
            <person name="Dodson R.J."/>
            <person name="Hickey E.K."/>
            <person name="Gwinn M.L."/>
            <person name="Dougherty B.A."/>
            <person name="Tomb J.-F."/>
            <person name="Fleischmann R.D."/>
            <person name="Richardson D.L."/>
            <person name="Peterson J.D."/>
            <person name="Kerlavage A.R."/>
            <person name="Quackenbush J."/>
            <person name="Salzberg S.L."/>
            <person name="Hanson M."/>
            <person name="van Vugt R."/>
            <person name="Palmer N."/>
            <person name="Adams M.D."/>
            <person name="Gocayne J.D."/>
            <person name="Weidman J.F."/>
            <person name="Utterback T.R."/>
            <person name="Watthey L."/>
            <person name="McDonald L.A."/>
            <person name="Artiach P."/>
            <person name="Bowman C."/>
            <person name="Garland S.A."/>
            <person name="Fujii C."/>
            <person name="Cotton M.D."/>
            <person name="Horst K."/>
            <person name="Roberts K.M."/>
            <person name="Hatch B."/>
            <person name="Smith H.O."/>
            <person name="Venter J.C."/>
        </authorList>
    </citation>
    <scope>NUCLEOTIDE SEQUENCE [LARGE SCALE GENOMIC DNA]</scope>
    <source>
        <strain>ATCC 35210 / DSM 4680 / CIP 102532 / B31</strain>
    </source>
</reference>
<accession>O51646</accession>